<reference key="1">
    <citation type="journal article" date="2000" name="FEBS Lett.">
        <title>Ulip6, a novel unc-33 and dihydropyrimidinase related protein highly expressed in developing rat brain.</title>
        <authorList>
            <person name="Horiuchi M."/>
            <person name="El Far O."/>
            <person name="Betz H."/>
        </authorList>
    </citation>
    <scope>NUCLEOTIDE SEQUENCE [MRNA]</scope>
</reference>
<reference key="2">
    <citation type="submission" date="2007-04" db="UniProtKB">
        <authorList>
            <person name="Lubec G."/>
            <person name="Afjehi-Sadat L."/>
            <person name="Chen W.-Q."/>
        </authorList>
    </citation>
    <scope>PROTEIN SEQUENCE OF 17-40; 171-189; 232-248; 344-354; 384-390 AND 552-559</scope>
    <scope>IDENTIFICATION BY MASS SPECTROMETRY</scope>
    <source>
        <strain>Sprague-Dawley</strain>
        <tissue>Hippocampus</tissue>
        <tissue>Spinal cord</tissue>
    </source>
</reference>
<gene>
    <name type="primary">Dpysl5</name>
    <name type="synonym">Ulip6</name>
</gene>
<protein>
    <recommendedName>
        <fullName>Dihydropyrimidinase-related protein 5</fullName>
        <shortName>DRP-5</shortName>
    </recommendedName>
    <alternativeName>
        <fullName>UNC33-like phosphoprotein 6</fullName>
        <shortName>ULIP-6</shortName>
    </alternativeName>
</protein>
<evidence type="ECO:0000250" key="1"/>
<evidence type="ECO:0000250" key="2">
    <source>
        <dbReference type="UniProtKB" id="Q9BPU6"/>
    </source>
</evidence>
<evidence type="ECO:0000250" key="3">
    <source>
        <dbReference type="UniProtKB" id="Q9EQF6"/>
    </source>
</evidence>
<evidence type="ECO:0000305" key="4"/>
<keyword id="KW-0963">Cytoplasm</keyword>
<keyword id="KW-0903">Direct protein sequencing</keyword>
<keyword id="KW-0488">Methylation</keyword>
<keyword id="KW-0597">Phosphoprotein</keyword>
<keyword id="KW-1185">Reference proteome</keyword>
<dbReference type="EMBL" id="AJ131436">
    <property type="protein sequence ID" value="CAB95193.1"/>
    <property type="molecule type" value="mRNA"/>
</dbReference>
<dbReference type="RefSeq" id="NP_075412.1">
    <property type="nucleotide sequence ID" value="NM_023023.1"/>
</dbReference>
<dbReference type="RefSeq" id="XP_017449839.1">
    <property type="nucleotide sequence ID" value="XM_017594350.1"/>
</dbReference>
<dbReference type="SMR" id="Q9JHU0"/>
<dbReference type="BioGRID" id="249320">
    <property type="interactions" value="1"/>
</dbReference>
<dbReference type="FunCoup" id="Q9JHU0">
    <property type="interactions" value="1030"/>
</dbReference>
<dbReference type="STRING" id="10116.ENSRNOP00000012274"/>
<dbReference type="MEROPS" id="M38.978"/>
<dbReference type="GlyGen" id="Q9JHU0">
    <property type="glycosylation" value="1 site, 1 O-linked glycan (1 site)"/>
</dbReference>
<dbReference type="iPTMnet" id="Q9JHU0"/>
<dbReference type="PhosphoSitePlus" id="Q9JHU0"/>
<dbReference type="jPOST" id="Q9JHU0"/>
<dbReference type="PaxDb" id="10116-ENSRNOP00000012274"/>
<dbReference type="Ensembl" id="ENSRNOT00000012273.5">
    <property type="protein sequence ID" value="ENSRNOP00000012274.4"/>
    <property type="gene ID" value="ENSRNOG00000008996.7"/>
</dbReference>
<dbReference type="GeneID" id="65208"/>
<dbReference type="KEGG" id="rno:65208"/>
<dbReference type="AGR" id="RGD:620467"/>
<dbReference type="CTD" id="56896"/>
<dbReference type="RGD" id="620467">
    <property type="gene designation" value="Dpysl5"/>
</dbReference>
<dbReference type="eggNOG" id="KOG2584">
    <property type="taxonomic scope" value="Eukaryota"/>
</dbReference>
<dbReference type="GeneTree" id="ENSGT01030000234527"/>
<dbReference type="HOGENOM" id="CLU_015572_2_2_1"/>
<dbReference type="InParanoid" id="Q9JHU0"/>
<dbReference type="OMA" id="CEHTPSI"/>
<dbReference type="OrthoDB" id="1924787at2759"/>
<dbReference type="PhylomeDB" id="Q9JHU0"/>
<dbReference type="TreeFam" id="TF314706"/>
<dbReference type="Reactome" id="R-RNO-399956">
    <property type="pathway name" value="CRMPs in Sema3A signaling"/>
</dbReference>
<dbReference type="PRO" id="PR:Q9JHU0"/>
<dbReference type="Proteomes" id="UP000002494">
    <property type="component" value="Chromosome 6"/>
</dbReference>
<dbReference type="Bgee" id="ENSRNOG00000008996">
    <property type="expression patterns" value="Expressed in frontal cortex and 12 other cell types or tissues"/>
</dbReference>
<dbReference type="GO" id="GO:0005737">
    <property type="term" value="C:cytoplasm"/>
    <property type="evidence" value="ECO:0000266"/>
    <property type="project" value="RGD"/>
</dbReference>
<dbReference type="GO" id="GO:0005829">
    <property type="term" value="C:cytosol"/>
    <property type="evidence" value="ECO:0000318"/>
    <property type="project" value="GO_Central"/>
</dbReference>
<dbReference type="GO" id="GO:0030425">
    <property type="term" value="C:dendrite"/>
    <property type="evidence" value="ECO:0000266"/>
    <property type="project" value="RGD"/>
</dbReference>
<dbReference type="GO" id="GO:0098978">
    <property type="term" value="C:glutamatergic synapse"/>
    <property type="evidence" value="ECO:0000266"/>
    <property type="project" value="RGD"/>
</dbReference>
<dbReference type="GO" id="GO:0043025">
    <property type="term" value="C:neuronal cell body"/>
    <property type="evidence" value="ECO:0000266"/>
    <property type="project" value="RGD"/>
</dbReference>
<dbReference type="GO" id="GO:0032991">
    <property type="term" value="C:protein-containing complex"/>
    <property type="evidence" value="ECO:0000314"/>
    <property type="project" value="RGD"/>
</dbReference>
<dbReference type="GO" id="GO:0045202">
    <property type="term" value="C:synapse"/>
    <property type="evidence" value="ECO:0000266"/>
    <property type="project" value="RGD"/>
</dbReference>
<dbReference type="GO" id="GO:0016812">
    <property type="term" value="F:hydrolase activity, acting on carbon-nitrogen (but not peptide) bonds, in cyclic amides"/>
    <property type="evidence" value="ECO:0000318"/>
    <property type="project" value="GO_Central"/>
</dbReference>
<dbReference type="GO" id="GO:0050774">
    <property type="term" value="P:negative regulation of dendrite morphogenesis"/>
    <property type="evidence" value="ECO:0000266"/>
    <property type="project" value="RGD"/>
</dbReference>
<dbReference type="GO" id="GO:0030182">
    <property type="term" value="P:neuron differentiation"/>
    <property type="evidence" value="ECO:0000270"/>
    <property type="project" value="RGD"/>
</dbReference>
<dbReference type="CDD" id="cd01314">
    <property type="entry name" value="D-HYD"/>
    <property type="match status" value="1"/>
</dbReference>
<dbReference type="FunFam" id="3.20.20.140:FF:000076">
    <property type="entry name" value="Dihydropyrimidinase like 2"/>
    <property type="match status" value="1"/>
</dbReference>
<dbReference type="FunFam" id="2.30.40.10:FF:000029">
    <property type="entry name" value="Dihydropyrimidinase-related protein 5"/>
    <property type="match status" value="1"/>
</dbReference>
<dbReference type="Gene3D" id="3.20.20.140">
    <property type="entry name" value="Metal-dependent hydrolases"/>
    <property type="match status" value="1"/>
</dbReference>
<dbReference type="Gene3D" id="2.30.40.10">
    <property type="entry name" value="Urease, subunit C, domain 1"/>
    <property type="match status" value="1"/>
</dbReference>
<dbReference type="InterPro" id="IPR006680">
    <property type="entry name" value="Amidohydro-rel"/>
</dbReference>
<dbReference type="InterPro" id="IPR011778">
    <property type="entry name" value="Hydantoinase/dihydroPyrase"/>
</dbReference>
<dbReference type="InterPro" id="IPR011059">
    <property type="entry name" value="Metal-dep_hydrolase_composite"/>
</dbReference>
<dbReference type="InterPro" id="IPR032466">
    <property type="entry name" value="Metal_Hydrolase"/>
</dbReference>
<dbReference type="InterPro" id="IPR050378">
    <property type="entry name" value="Metallo-dep_Hydrolases_sf"/>
</dbReference>
<dbReference type="NCBIfam" id="TIGR02033">
    <property type="entry name" value="D-hydantoinase"/>
    <property type="match status" value="1"/>
</dbReference>
<dbReference type="PANTHER" id="PTHR11647:SF58">
    <property type="entry name" value="DIHYDROPYRIMIDINASE-RELATED PROTEIN 5"/>
    <property type="match status" value="1"/>
</dbReference>
<dbReference type="PANTHER" id="PTHR11647">
    <property type="entry name" value="HYDRANTOINASE/DIHYDROPYRIMIDINASE FAMILY MEMBER"/>
    <property type="match status" value="1"/>
</dbReference>
<dbReference type="Pfam" id="PF01979">
    <property type="entry name" value="Amidohydro_1"/>
    <property type="match status" value="1"/>
</dbReference>
<dbReference type="SUPFAM" id="SSF51338">
    <property type="entry name" value="Composite domain of metallo-dependent hydrolases"/>
    <property type="match status" value="2"/>
</dbReference>
<dbReference type="SUPFAM" id="SSF51556">
    <property type="entry name" value="Metallo-dependent hydrolases"/>
    <property type="match status" value="1"/>
</dbReference>
<comment type="function">
    <text evidence="2">Involved in the negative regulation of dendrite outgrowth.</text>
</comment>
<comment type="subunit">
    <text evidence="2 3">Homotetramer, and heterotetramer with other DPYS-like proteins. Interacts with DPYSL2, DPYSL3 and DPYSL4 (By similarity). Interacts with MAP2 and TUBB3 (By similarity).</text>
</comment>
<comment type="subcellular location">
    <subcellularLocation>
        <location evidence="1">Cytoplasm</location>
    </subcellularLocation>
</comment>
<comment type="tissue specificity">
    <text>Highly expressed in embryonic and early postnatal brain and spinal cord.</text>
</comment>
<comment type="similarity">
    <text evidence="4">Belongs to the metallo-dependent hydrolases superfamily. Hydantoinase/dihydropyrimidinase family.</text>
</comment>
<comment type="caution">
    <text evidence="4">Lacks most of the conserved residues that are essential for binding the metal cofactor and hence for dihydropyrimidinase activity. Its enzyme activity is therefore unsure.</text>
</comment>
<organism>
    <name type="scientific">Rattus norvegicus</name>
    <name type="common">Rat</name>
    <dbReference type="NCBI Taxonomy" id="10116"/>
    <lineage>
        <taxon>Eukaryota</taxon>
        <taxon>Metazoa</taxon>
        <taxon>Chordata</taxon>
        <taxon>Craniata</taxon>
        <taxon>Vertebrata</taxon>
        <taxon>Euteleostomi</taxon>
        <taxon>Mammalia</taxon>
        <taxon>Eutheria</taxon>
        <taxon>Euarchontoglires</taxon>
        <taxon>Glires</taxon>
        <taxon>Rodentia</taxon>
        <taxon>Myomorpha</taxon>
        <taxon>Muroidea</taxon>
        <taxon>Muridae</taxon>
        <taxon>Murinae</taxon>
        <taxon>Rattus</taxon>
    </lineage>
</organism>
<feature type="chain" id="PRO_0000165926" description="Dihydropyrimidinase-related protein 5">
    <location>
        <begin position="1"/>
        <end position="564"/>
    </location>
</feature>
<feature type="modified residue" description="Phosphothreonine" evidence="3">
    <location>
        <position position="509"/>
    </location>
</feature>
<feature type="modified residue" description="Phosphothreonine" evidence="3">
    <location>
        <position position="514"/>
    </location>
</feature>
<feature type="modified residue" description="Phosphoserine" evidence="3">
    <location>
        <position position="532"/>
    </location>
</feature>
<feature type="modified residue" description="Phosphoserine" evidence="3">
    <location>
        <position position="538"/>
    </location>
</feature>
<feature type="modified residue" description="Omega-N-methylarginine" evidence="3">
    <location>
        <position position="559"/>
    </location>
</feature>
<name>DPYL5_RAT</name>
<proteinExistence type="evidence at protein level"/>
<sequence length="564" mass="61540">MLANSASVRILIKGGKVVNDDCTHEADVYIENGIIQQVGRELMIPGGAKVIDATGKLVIPGGIDTSTHFHQTFMNATCVDDFYHGTKAALVGGTTMIIGHVLPDKETSLVEAYEKCRALADPKVCCDYALHVGITWWAPKVKAEMETLVREKGVNSFQMFMTYKDLYMLRDSELYQVFHACRDFGAIPRVHAENGELVAEGAKEALDLGITGPEGIEISHPEELEAEATHRVITIANRTHCPIYLVNVSSISAGDVIAAAKMQGKVVLAETTNAHATLTGLHYYHQDWSHAAAYVTVPPLRLDTNTSTYLMSLLANDTLNIVASDHRPFTTKQKAMGKEDFTKIPHGVSGVQDRMSVVWERGVVGGKMDENRFVAVTSSNAAKILNLYPRKGRIIPGADADVVVWDPEATKTISASTQVQGGDFNLYENMRCHGVPLVTISRGRVVYENGVFMCAEGTGKFCPLRSFPDIVYKKLVQREKTLKVRGVDRTPYLGDVAVVVNPGKKEMGTPLADTPTRPVTRHGGMRDLHESSFSLSGSQIDDHVPKRASARILAPPGGRSSGIW</sequence>
<accession>Q9JHU0</accession>